<organism>
    <name type="scientific">Geotalea daltonii (strain DSM 22248 / JCM 15807 / FRC-32)</name>
    <name type="common">Geobacter daltonii</name>
    <dbReference type="NCBI Taxonomy" id="316067"/>
    <lineage>
        <taxon>Bacteria</taxon>
        <taxon>Pseudomonadati</taxon>
        <taxon>Thermodesulfobacteriota</taxon>
        <taxon>Desulfuromonadia</taxon>
        <taxon>Geobacterales</taxon>
        <taxon>Geobacteraceae</taxon>
        <taxon>Geotalea</taxon>
    </lineage>
</organism>
<proteinExistence type="inferred from homology"/>
<evidence type="ECO:0000255" key="1">
    <source>
        <dbReference type="HAMAP-Rule" id="MF_00107"/>
    </source>
</evidence>
<comment type="function">
    <text evidence="1">Involved in the biosynthesis of isopentenyl diphosphate (IPP) and dimethylallyl diphosphate (DMAPP), two major building blocks of isoprenoid compounds. Catalyzes the conversion of 4-diphosphocytidyl-2-C-methyl-D-erythritol 2-phosphate (CDP-ME2P) to 2-C-methyl-D-erythritol 2,4-cyclodiphosphate (ME-CPP) with a corresponding release of cytidine 5-monophosphate (CMP).</text>
</comment>
<comment type="catalytic activity">
    <reaction evidence="1">
        <text>4-CDP-2-C-methyl-D-erythritol 2-phosphate = 2-C-methyl-D-erythritol 2,4-cyclic diphosphate + CMP</text>
        <dbReference type="Rhea" id="RHEA:23864"/>
        <dbReference type="ChEBI" id="CHEBI:57919"/>
        <dbReference type="ChEBI" id="CHEBI:58483"/>
        <dbReference type="ChEBI" id="CHEBI:60377"/>
        <dbReference type="EC" id="4.6.1.12"/>
    </reaction>
</comment>
<comment type="cofactor">
    <cofactor evidence="1">
        <name>a divalent metal cation</name>
        <dbReference type="ChEBI" id="CHEBI:60240"/>
    </cofactor>
    <text evidence="1">Binds 1 divalent metal cation per subunit.</text>
</comment>
<comment type="pathway">
    <text evidence="1">Isoprenoid biosynthesis; isopentenyl diphosphate biosynthesis via DXP pathway; isopentenyl diphosphate from 1-deoxy-D-xylulose 5-phosphate: step 4/6.</text>
</comment>
<comment type="subunit">
    <text evidence="1">Homotrimer.</text>
</comment>
<comment type="similarity">
    <text evidence="1">Belongs to the IspF family.</text>
</comment>
<dbReference type="EC" id="4.6.1.12" evidence="1"/>
<dbReference type="EMBL" id="CP001390">
    <property type="protein sequence ID" value="ACM18926.1"/>
    <property type="molecule type" value="Genomic_DNA"/>
</dbReference>
<dbReference type="RefSeq" id="WP_012645655.1">
    <property type="nucleotide sequence ID" value="NC_011979.1"/>
</dbReference>
<dbReference type="SMR" id="B9LZW2"/>
<dbReference type="STRING" id="316067.Geob_0559"/>
<dbReference type="KEGG" id="geo:Geob_0559"/>
<dbReference type="eggNOG" id="COG0245">
    <property type="taxonomic scope" value="Bacteria"/>
</dbReference>
<dbReference type="HOGENOM" id="CLU_084630_2_0_7"/>
<dbReference type="OrthoDB" id="9804336at2"/>
<dbReference type="UniPathway" id="UPA00056">
    <property type="reaction ID" value="UER00095"/>
</dbReference>
<dbReference type="Proteomes" id="UP000007721">
    <property type="component" value="Chromosome"/>
</dbReference>
<dbReference type="GO" id="GO:0008685">
    <property type="term" value="F:2-C-methyl-D-erythritol 2,4-cyclodiphosphate synthase activity"/>
    <property type="evidence" value="ECO:0007669"/>
    <property type="project" value="UniProtKB-UniRule"/>
</dbReference>
<dbReference type="GO" id="GO:0046872">
    <property type="term" value="F:metal ion binding"/>
    <property type="evidence" value="ECO:0007669"/>
    <property type="project" value="UniProtKB-KW"/>
</dbReference>
<dbReference type="GO" id="GO:0019288">
    <property type="term" value="P:isopentenyl diphosphate biosynthetic process, methylerythritol 4-phosphate pathway"/>
    <property type="evidence" value="ECO:0007669"/>
    <property type="project" value="UniProtKB-UniRule"/>
</dbReference>
<dbReference type="GO" id="GO:0016114">
    <property type="term" value="P:terpenoid biosynthetic process"/>
    <property type="evidence" value="ECO:0007669"/>
    <property type="project" value="InterPro"/>
</dbReference>
<dbReference type="CDD" id="cd00554">
    <property type="entry name" value="MECDP_synthase"/>
    <property type="match status" value="1"/>
</dbReference>
<dbReference type="FunFam" id="3.30.1330.50:FF:000001">
    <property type="entry name" value="2-C-methyl-D-erythritol 2,4-cyclodiphosphate synthase"/>
    <property type="match status" value="1"/>
</dbReference>
<dbReference type="Gene3D" id="3.30.1330.50">
    <property type="entry name" value="2-C-methyl-D-erythritol 2,4-cyclodiphosphate synthase"/>
    <property type="match status" value="1"/>
</dbReference>
<dbReference type="HAMAP" id="MF_00107">
    <property type="entry name" value="IspF"/>
    <property type="match status" value="1"/>
</dbReference>
<dbReference type="InterPro" id="IPR003526">
    <property type="entry name" value="MECDP_synthase"/>
</dbReference>
<dbReference type="InterPro" id="IPR020555">
    <property type="entry name" value="MECDP_synthase_CS"/>
</dbReference>
<dbReference type="InterPro" id="IPR036571">
    <property type="entry name" value="MECDP_synthase_sf"/>
</dbReference>
<dbReference type="NCBIfam" id="TIGR00151">
    <property type="entry name" value="ispF"/>
    <property type="match status" value="1"/>
</dbReference>
<dbReference type="PANTHER" id="PTHR43181">
    <property type="entry name" value="2-C-METHYL-D-ERYTHRITOL 2,4-CYCLODIPHOSPHATE SYNTHASE, CHLOROPLASTIC"/>
    <property type="match status" value="1"/>
</dbReference>
<dbReference type="PANTHER" id="PTHR43181:SF1">
    <property type="entry name" value="2-C-METHYL-D-ERYTHRITOL 2,4-CYCLODIPHOSPHATE SYNTHASE, CHLOROPLASTIC"/>
    <property type="match status" value="1"/>
</dbReference>
<dbReference type="Pfam" id="PF02542">
    <property type="entry name" value="YgbB"/>
    <property type="match status" value="1"/>
</dbReference>
<dbReference type="SUPFAM" id="SSF69765">
    <property type="entry name" value="IpsF-like"/>
    <property type="match status" value="1"/>
</dbReference>
<dbReference type="PROSITE" id="PS01350">
    <property type="entry name" value="ISPF"/>
    <property type="match status" value="1"/>
</dbReference>
<feature type="chain" id="PRO_1000190710" description="2-C-methyl-D-erythritol 2,4-cyclodiphosphate synthase">
    <location>
        <begin position="1"/>
        <end position="171"/>
    </location>
</feature>
<feature type="binding site" evidence="1">
    <location>
        <begin position="8"/>
        <end position="10"/>
    </location>
    <ligand>
        <name>4-CDP-2-C-methyl-D-erythritol 2-phosphate</name>
        <dbReference type="ChEBI" id="CHEBI:57919"/>
    </ligand>
</feature>
<feature type="binding site" evidence="1">
    <location>
        <position position="8"/>
    </location>
    <ligand>
        <name>a divalent metal cation</name>
        <dbReference type="ChEBI" id="CHEBI:60240"/>
    </ligand>
</feature>
<feature type="binding site" evidence="1">
    <location>
        <position position="10"/>
    </location>
    <ligand>
        <name>a divalent metal cation</name>
        <dbReference type="ChEBI" id="CHEBI:60240"/>
    </ligand>
</feature>
<feature type="binding site" evidence="1">
    <location>
        <begin position="34"/>
        <end position="35"/>
    </location>
    <ligand>
        <name>4-CDP-2-C-methyl-D-erythritol 2-phosphate</name>
        <dbReference type="ChEBI" id="CHEBI:57919"/>
    </ligand>
</feature>
<feature type="binding site" evidence="1">
    <location>
        <position position="42"/>
    </location>
    <ligand>
        <name>a divalent metal cation</name>
        <dbReference type="ChEBI" id="CHEBI:60240"/>
    </ligand>
</feature>
<feature type="binding site" evidence="1">
    <location>
        <begin position="56"/>
        <end position="58"/>
    </location>
    <ligand>
        <name>4-CDP-2-C-methyl-D-erythritol 2-phosphate</name>
        <dbReference type="ChEBI" id="CHEBI:57919"/>
    </ligand>
</feature>
<feature type="binding site" evidence="1">
    <location>
        <begin position="61"/>
        <end position="65"/>
    </location>
    <ligand>
        <name>4-CDP-2-C-methyl-D-erythritol 2-phosphate</name>
        <dbReference type="ChEBI" id="CHEBI:57919"/>
    </ligand>
</feature>
<feature type="binding site" evidence="1">
    <location>
        <begin position="132"/>
        <end position="135"/>
    </location>
    <ligand>
        <name>4-CDP-2-C-methyl-D-erythritol 2-phosphate</name>
        <dbReference type="ChEBI" id="CHEBI:57919"/>
    </ligand>
</feature>
<feature type="binding site" evidence="1">
    <location>
        <position position="139"/>
    </location>
    <ligand>
        <name>4-CDP-2-C-methyl-D-erythritol 2-phosphate</name>
        <dbReference type="ChEBI" id="CHEBI:57919"/>
    </ligand>
</feature>
<feature type="binding site" evidence="1">
    <location>
        <position position="142"/>
    </location>
    <ligand>
        <name>4-CDP-2-C-methyl-D-erythritol 2-phosphate</name>
        <dbReference type="ChEBI" id="CHEBI:57919"/>
    </ligand>
</feature>
<feature type="site" description="Transition state stabilizer" evidence="1">
    <location>
        <position position="34"/>
    </location>
</feature>
<feature type="site" description="Transition state stabilizer" evidence="1">
    <location>
        <position position="133"/>
    </location>
</feature>
<reference key="1">
    <citation type="submission" date="2009-01" db="EMBL/GenBank/DDBJ databases">
        <title>Complete sequence of Geobacter sp. FRC-32.</title>
        <authorList>
            <consortium name="US DOE Joint Genome Institute"/>
            <person name="Lucas S."/>
            <person name="Copeland A."/>
            <person name="Lapidus A."/>
            <person name="Glavina del Rio T."/>
            <person name="Dalin E."/>
            <person name="Tice H."/>
            <person name="Bruce D."/>
            <person name="Goodwin L."/>
            <person name="Pitluck S."/>
            <person name="Saunders E."/>
            <person name="Brettin T."/>
            <person name="Detter J.C."/>
            <person name="Han C."/>
            <person name="Larimer F."/>
            <person name="Land M."/>
            <person name="Hauser L."/>
            <person name="Kyrpides N."/>
            <person name="Ovchinnikova G."/>
            <person name="Kostka J."/>
            <person name="Richardson P."/>
        </authorList>
    </citation>
    <scope>NUCLEOTIDE SEQUENCE [LARGE SCALE GENOMIC DNA]</scope>
    <source>
        <strain>DSM 22248 / JCM 15807 / FRC-32</strain>
    </source>
</reference>
<accession>B9LZW2</accession>
<protein>
    <recommendedName>
        <fullName evidence="1">2-C-methyl-D-erythritol 2,4-cyclodiphosphate synthase</fullName>
        <shortName evidence="1">MECDP-synthase</shortName>
        <shortName evidence="1">MECPP-synthase</shortName>
        <shortName evidence="1">MECPS</shortName>
        <ecNumber evidence="1">4.6.1.12</ecNumber>
    </recommendedName>
</protein>
<keyword id="KW-0414">Isoprene biosynthesis</keyword>
<keyword id="KW-0456">Lyase</keyword>
<keyword id="KW-0479">Metal-binding</keyword>
<keyword id="KW-1185">Reference proteome</keyword>
<name>ISPF_GEODF</name>
<gene>
    <name evidence="1" type="primary">ispF</name>
    <name type="ordered locus">Geob_0559</name>
</gene>
<sequence>MRIGHGYDVHKLVSGRKLILGGVDIPYERGLLGHSDADVLLHAISDAILGAIGEGDIGKHFPDTDPAYKGADSIKLLMHVMGLARDRGYAIGNVDATIVAQRPKLAAHIPLMGENIAKALETEASRINVKATTTEELGFCGRGEGIAAYAVALLQRRHELSPETREVLETR</sequence>